<accession>Q9P7K1</accession>
<gene>
    <name type="ORF">SPCC24B10.04</name>
</gene>
<dbReference type="EMBL" id="CU329672">
    <property type="protein sequence ID" value="CAB76213.1"/>
    <property type="molecule type" value="Genomic_DNA"/>
</dbReference>
<dbReference type="PIR" id="T50411">
    <property type="entry name" value="T50411"/>
</dbReference>
<dbReference type="SMR" id="Q9P7K1"/>
<dbReference type="BioGRID" id="275922">
    <property type="interactions" value="2"/>
</dbReference>
<dbReference type="ComplexPortal" id="CPX-10323">
    <property type="entry name" value="54S mitochondrial large ribosomal subunit"/>
</dbReference>
<dbReference type="iPTMnet" id="Q9P7K1"/>
<dbReference type="PaxDb" id="4896-SPCC24B10.04.1"/>
<dbReference type="EnsemblFungi" id="SPCC24B10.04.1">
    <property type="protein sequence ID" value="SPCC24B10.04.1:pep"/>
    <property type="gene ID" value="SPCC24B10.04"/>
</dbReference>
<dbReference type="KEGG" id="spo:2539356"/>
<dbReference type="PomBase" id="SPCC24B10.04"/>
<dbReference type="VEuPathDB" id="FungiDB:SPCC24B10.04"/>
<dbReference type="HOGENOM" id="CLU_1372923_0_0_1"/>
<dbReference type="InParanoid" id="Q9P7K1"/>
<dbReference type="OMA" id="STRSWFH"/>
<dbReference type="PRO" id="PR:Q9P7K1"/>
<dbReference type="Proteomes" id="UP000002485">
    <property type="component" value="Chromosome III"/>
</dbReference>
<dbReference type="GO" id="GO:0005762">
    <property type="term" value="C:mitochondrial large ribosomal subunit"/>
    <property type="evidence" value="ECO:0000266"/>
    <property type="project" value="PomBase"/>
</dbReference>
<dbReference type="GO" id="GO:0005739">
    <property type="term" value="C:mitochondrion"/>
    <property type="evidence" value="ECO:0007005"/>
    <property type="project" value="PomBase"/>
</dbReference>
<dbReference type="GO" id="GO:0032543">
    <property type="term" value="P:mitochondrial translation"/>
    <property type="evidence" value="ECO:0000266"/>
    <property type="project" value="PomBase"/>
</dbReference>
<comment type="subcellular location">
    <subcellularLocation>
        <location evidence="1">Mitochondrion</location>
    </subcellularLocation>
</comment>
<proteinExistence type="predicted"/>
<keyword id="KW-0496">Mitochondrion</keyword>
<keyword id="KW-1185">Reference proteome</keyword>
<feature type="chain" id="PRO_0000304014" description="Uncharacterized protein C24B10.04">
    <location>
        <begin position="1"/>
        <end position="199"/>
    </location>
</feature>
<name>YJN4_SCHPO</name>
<protein>
    <recommendedName>
        <fullName>Uncharacterized protein C24B10.04</fullName>
    </recommendedName>
</protein>
<organism>
    <name type="scientific">Schizosaccharomyces pombe (strain 972 / ATCC 24843)</name>
    <name type="common">Fission yeast</name>
    <dbReference type="NCBI Taxonomy" id="284812"/>
    <lineage>
        <taxon>Eukaryota</taxon>
        <taxon>Fungi</taxon>
        <taxon>Dikarya</taxon>
        <taxon>Ascomycota</taxon>
        <taxon>Taphrinomycotina</taxon>
        <taxon>Schizosaccharomycetes</taxon>
        <taxon>Schizosaccharomycetales</taxon>
        <taxon>Schizosaccharomycetaceae</taxon>
        <taxon>Schizosaccharomyces</taxon>
    </lineage>
</organism>
<evidence type="ECO:0000269" key="1">
    <source>
    </source>
</evidence>
<reference key="1">
    <citation type="journal article" date="2002" name="Nature">
        <title>The genome sequence of Schizosaccharomyces pombe.</title>
        <authorList>
            <person name="Wood V."/>
            <person name="Gwilliam R."/>
            <person name="Rajandream M.A."/>
            <person name="Lyne M.H."/>
            <person name="Lyne R."/>
            <person name="Stewart A."/>
            <person name="Sgouros J.G."/>
            <person name="Peat N."/>
            <person name="Hayles J."/>
            <person name="Baker S.G."/>
            <person name="Basham D."/>
            <person name="Bowman S."/>
            <person name="Brooks K."/>
            <person name="Brown D."/>
            <person name="Brown S."/>
            <person name="Chillingworth T."/>
            <person name="Churcher C.M."/>
            <person name="Collins M."/>
            <person name="Connor R."/>
            <person name="Cronin A."/>
            <person name="Davis P."/>
            <person name="Feltwell T."/>
            <person name="Fraser A."/>
            <person name="Gentles S."/>
            <person name="Goble A."/>
            <person name="Hamlin N."/>
            <person name="Harris D.E."/>
            <person name="Hidalgo J."/>
            <person name="Hodgson G."/>
            <person name="Holroyd S."/>
            <person name="Hornsby T."/>
            <person name="Howarth S."/>
            <person name="Huckle E.J."/>
            <person name="Hunt S."/>
            <person name="Jagels K."/>
            <person name="James K.D."/>
            <person name="Jones L."/>
            <person name="Jones M."/>
            <person name="Leather S."/>
            <person name="McDonald S."/>
            <person name="McLean J."/>
            <person name="Mooney P."/>
            <person name="Moule S."/>
            <person name="Mungall K.L."/>
            <person name="Murphy L.D."/>
            <person name="Niblett D."/>
            <person name="Odell C."/>
            <person name="Oliver K."/>
            <person name="O'Neil S."/>
            <person name="Pearson D."/>
            <person name="Quail M.A."/>
            <person name="Rabbinowitsch E."/>
            <person name="Rutherford K.M."/>
            <person name="Rutter S."/>
            <person name="Saunders D."/>
            <person name="Seeger K."/>
            <person name="Sharp S."/>
            <person name="Skelton J."/>
            <person name="Simmonds M.N."/>
            <person name="Squares R."/>
            <person name="Squares S."/>
            <person name="Stevens K."/>
            <person name="Taylor K."/>
            <person name="Taylor R.G."/>
            <person name="Tivey A."/>
            <person name="Walsh S.V."/>
            <person name="Warren T."/>
            <person name="Whitehead S."/>
            <person name="Woodward J.R."/>
            <person name="Volckaert G."/>
            <person name="Aert R."/>
            <person name="Robben J."/>
            <person name="Grymonprez B."/>
            <person name="Weltjens I."/>
            <person name="Vanstreels E."/>
            <person name="Rieger M."/>
            <person name="Schaefer M."/>
            <person name="Mueller-Auer S."/>
            <person name="Gabel C."/>
            <person name="Fuchs M."/>
            <person name="Duesterhoeft A."/>
            <person name="Fritzc C."/>
            <person name="Holzer E."/>
            <person name="Moestl D."/>
            <person name="Hilbert H."/>
            <person name="Borzym K."/>
            <person name="Langer I."/>
            <person name="Beck A."/>
            <person name="Lehrach H."/>
            <person name="Reinhardt R."/>
            <person name="Pohl T.M."/>
            <person name="Eger P."/>
            <person name="Zimmermann W."/>
            <person name="Wedler H."/>
            <person name="Wambutt R."/>
            <person name="Purnelle B."/>
            <person name="Goffeau A."/>
            <person name="Cadieu E."/>
            <person name="Dreano S."/>
            <person name="Gloux S."/>
            <person name="Lelaure V."/>
            <person name="Mottier S."/>
            <person name="Galibert F."/>
            <person name="Aves S.J."/>
            <person name="Xiang Z."/>
            <person name="Hunt C."/>
            <person name="Moore K."/>
            <person name="Hurst S.M."/>
            <person name="Lucas M."/>
            <person name="Rochet M."/>
            <person name="Gaillardin C."/>
            <person name="Tallada V.A."/>
            <person name="Garzon A."/>
            <person name="Thode G."/>
            <person name="Daga R.R."/>
            <person name="Cruzado L."/>
            <person name="Jimenez J."/>
            <person name="Sanchez M."/>
            <person name="del Rey F."/>
            <person name="Benito J."/>
            <person name="Dominguez A."/>
            <person name="Revuelta J.L."/>
            <person name="Moreno S."/>
            <person name="Armstrong J."/>
            <person name="Forsburg S.L."/>
            <person name="Cerutti L."/>
            <person name="Lowe T."/>
            <person name="McCombie W.R."/>
            <person name="Paulsen I."/>
            <person name="Potashkin J."/>
            <person name="Shpakovski G.V."/>
            <person name="Ussery D."/>
            <person name="Barrell B.G."/>
            <person name="Nurse P."/>
        </authorList>
    </citation>
    <scope>NUCLEOTIDE SEQUENCE [LARGE SCALE GENOMIC DNA]</scope>
    <source>
        <strain>972 / ATCC 24843</strain>
    </source>
</reference>
<reference key="2">
    <citation type="journal article" date="2006" name="Nat. Biotechnol.">
        <title>ORFeome cloning and global analysis of protein localization in the fission yeast Schizosaccharomyces pombe.</title>
        <authorList>
            <person name="Matsuyama A."/>
            <person name="Arai R."/>
            <person name="Yashiroda Y."/>
            <person name="Shirai A."/>
            <person name="Kamata A."/>
            <person name="Sekido S."/>
            <person name="Kobayashi Y."/>
            <person name="Hashimoto A."/>
            <person name="Hamamoto M."/>
            <person name="Hiraoka Y."/>
            <person name="Horinouchi S."/>
            <person name="Yoshida M."/>
        </authorList>
    </citation>
    <scope>SUBCELLULAR LOCATION [LARGE SCALE ANALYSIS]</scope>
</reference>
<sequence>MFSRNFTTPSIRIYLNSCVSHRSFHNTTVSQSWLSRIRDRFRGTKEDEKKQIADKDMAAMKVVIPPKKRVSKWKDIQLFEKFAEPSLNREDSLKMINEIRKSLQLQTPWSPEARLQAVKLAYQKTGRIVYDAPLQNIHNWDDLYNYYDKIVDYGDTTLHGRLAWKPTPGLMSLPNVVLHVDENGYPLERKKRRLSRSVA</sequence>